<dbReference type="EC" id="5.3.1.1" evidence="1"/>
<dbReference type="EMBL" id="CP000419">
    <property type="protein sequence ID" value="ABJ65803.1"/>
    <property type="molecule type" value="Genomic_DNA"/>
</dbReference>
<dbReference type="RefSeq" id="WP_002946314.1">
    <property type="nucleotide sequence ID" value="NC_008532.1"/>
</dbReference>
<dbReference type="SMR" id="Q03LW9"/>
<dbReference type="GeneID" id="66898398"/>
<dbReference type="KEGG" id="ste:STER_0525"/>
<dbReference type="HOGENOM" id="CLU_024251_2_3_9"/>
<dbReference type="UniPathway" id="UPA00109">
    <property type="reaction ID" value="UER00189"/>
</dbReference>
<dbReference type="UniPathway" id="UPA00138"/>
<dbReference type="GO" id="GO:0005829">
    <property type="term" value="C:cytosol"/>
    <property type="evidence" value="ECO:0007669"/>
    <property type="project" value="TreeGrafter"/>
</dbReference>
<dbReference type="GO" id="GO:0004807">
    <property type="term" value="F:triose-phosphate isomerase activity"/>
    <property type="evidence" value="ECO:0007669"/>
    <property type="project" value="UniProtKB-UniRule"/>
</dbReference>
<dbReference type="GO" id="GO:0006094">
    <property type="term" value="P:gluconeogenesis"/>
    <property type="evidence" value="ECO:0007669"/>
    <property type="project" value="UniProtKB-UniRule"/>
</dbReference>
<dbReference type="GO" id="GO:0046166">
    <property type="term" value="P:glyceraldehyde-3-phosphate biosynthetic process"/>
    <property type="evidence" value="ECO:0007669"/>
    <property type="project" value="TreeGrafter"/>
</dbReference>
<dbReference type="GO" id="GO:0019563">
    <property type="term" value="P:glycerol catabolic process"/>
    <property type="evidence" value="ECO:0007669"/>
    <property type="project" value="TreeGrafter"/>
</dbReference>
<dbReference type="GO" id="GO:0006096">
    <property type="term" value="P:glycolytic process"/>
    <property type="evidence" value="ECO:0007669"/>
    <property type="project" value="UniProtKB-UniRule"/>
</dbReference>
<dbReference type="CDD" id="cd00311">
    <property type="entry name" value="TIM"/>
    <property type="match status" value="1"/>
</dbReference>
<dbReference type="FunFam" id="3.20.20.70:FF:000016">
    <property type="entry name" value="Triosephosphate isomerase"/>
    <property type="match status" value="1"/>
</dbReference>
<dbReference type="Gene3D" id="3.20.20.70">
    <property type="entry name" value="Aldolase class I"/>
    <property type="match status" value="1"/>
</dbReference>
<dbReference type="HAMAP" id="MF_00147_B">
    <property type="entry name" value="TIM_B"/>
    <property type="match status" value="1"/>
</dbReference>
<dbReference type="InterPro" id="IPR013785">
    <property type="entry name" value="Aldolase_TIM"/>
</dbReference>
<dbReference type="InterPro" id="IPR035990">
    <property type="entry name" value="TIM_sf"/>
</dbReference>
<dbReference type="InterPro" id="IPR022896">
    <property type="entry name" value="TrioseP_Isoase_bac/euk"/>
</dbReference>
<dbReference type="InterPro" id="IPR000652">
    <property type="entry name" value="Triosephosphate_isomerase"/>
</dbReference>
<dbReference type="InterPro" id="IPR020861">
    <property type="entry name" value="Triosephosphate_isomerase_AS"/>
</dbReference>
<dbReference type="NCBIfam" id="TIGR00419">
    <property type="entry name" value="tim"/>
    <property type="match status" value="1"/>
</dbReference>
<dbReference type="PANTHER" id="PTHR21139">
    <property type="entry name" value="TRIOSEPHOSPHATE ISOMERASE"/>
    <property type="match status" value="1"/>
</dbReference>
<dbReference type="PANTHER" id="PTHR21139:SF42">
    <property type="entry name" value="TRIOSEPHOSPHATE ISOMERASE"/>
    <property type="match status" value="1"/>
</dbReference>
<dbReference type="Pfam" id="PF00121">
    <property type="entry name" value="TIM"/>
    <property type="match status" value="1"/>
</dbReference>
<dbReference type="SUPFAM" id="SSF51351">
    <property type="entry name" value="Triosephosphate isomerase (TIM)"/>
    <property type="match status" value="1"/>
</dbReference>
<dbReference type="PROSITE" id="PS00171">
    <property type="entry name" value="TIM_1"/>
    <property type="match status" value="1"/>
</dbReference>
<dbReference type="PROSITE" id="PS51440">
    <property type="entry name" value="TIM_2"/>
    <property type="match status" value="1"/>
</dbReference>
<organism>
    <name type="scientific">Streptococcus thermophilus (strain ATCC BAA-491 / LMD-9)</name>
    <dbReference type="NCBI Taxonomy" id="322159"/>
    <lineage>
        <taxon>Bacteria</taxon>
        <taxon>Bacillati</taxon>
        <taxon>Bacillota</taxon>
        <taxon>Bacilli</taxon>
        <taxon>Lactobacillales</taxon>
        <taxon>Streptococcaceae</taxon>
        <taxon>Streptococcus</taxon>
    </lineage>
</organism>
<reference key="1">
    <citation type="journal article" date="2006" name="Proc. Natl. Acad. Sci. U.S.A.">
        <title>Comparative genomics of the lactic acid bacteria.</title>
        <authorList>
            <person name="Makarova K.S."/>
            <person name="Slesarev A."/>
            <person name="Wolf Y.I."/>
            <person name="Sorokin A."/>
            <person name="Mirkin B."/>
            <person name="Koonin E.V."/>
            <person name="Pavlov A."/>
            <person name="Pavlova N."/>
            <person name="Karamychev V."/>
            <person name="Polouchine N."/>
            <person name="Shakhova V."/>
            <person name="Grigoriev I."/>
            <person name="Lou Y."/>
            <person name="Rohksar D."/>
            <person name="Lucas S."/>
            <person name="Huang K."/>
            <person name="Goodstein D.M."/>
            <person name="Hawkins T."/>
            <person name="Plengvidhya V."/>
            <person name="Welker D."/>
            <person name="Hughes J."/>
            <person name="Goh Y."/>
            <person name="Benson A."/>
            <person name="Baldwin K."/>
            <person name="Lee J.-H."/>
            <person name="Diaz-Muniz I."/>
            <person name="Dosti B."/>
            <person name="Smeianov V."/>
            <person name="Wechter W."/>
            <person name="Barabote R."/>
            <person name="Lorca G."/>
            <person name="Altermann E."/>
            <person name="Barrangou R."/>
            <person name="Ganesan B."/>
            <person name="Xie Y."/>
            <person name="Rawsthorne H."/>
            <person name="Tamir D."/>
            <person name="Parker C."/>
            <person name="Breidt F."/>
            <person name="Broadbent J.R."/>
            <person name="Hutkins R."/>
            <person name="O'Sullivan D."/>
            <person name="Steele J."/>
            <person name="Unlu G."/>
            <person name="Saier M.H. Jr."/>
            <person name="Klaenhammer T."/>
            <person name="Richardson P."/>
            <person name="Kozyavkin S."/>
            <person name="Weimer B.C."/>
            <person name="Mills D.A."/>
        </authorList>
    </citation>
    <scope>NUCLEOTIDE SEQUENCE [LARGE SCALE GENOMIC DNA]</scope>
    <source>
        <strain>ATCC BAA-491 / LMD-9</strain>
    </source>
</reference>
<sequence>MSRKPFIAGNWKMNKNPEEAKAFVEAVASKLPSADLVEAGIAVPAVDLTTVIAAAKGSNLKVAAQNTYFENSGAFTGETSPQVLKEIGTDYVVIGHSERRDYFHETDEDINKKAKAIFANGMIPIICCGESLETYEAGKAAEFVGAQVSAALAGLTPEQVASSVIAYEPIWAIGTGKSASQDDAQKMCKVVRDVVAADFGQEVADKVRVLYGGSVKPENVAEYMACPDVDGALVGGASLEPESFLALLDFVK</sequence>
<keyword id="KW-0963">Cytoplasm</keyword>
<keyword id="KW-0312">Gluconeogenesis</keyword>
<keyword id="KW-0324">Glycolysis</keyword>
<keyword id="KW-0413">Isomerase</keyword>
<accession>Q03LW9</accession>
<name>TPIS_STRTD</name>
<proteinExistence type="inferred from homology"/>
<protein>
    <recommendedName>
        <fullName evidence="1">Triosephosphate isomerase</fullName>
        <shortName evidence="1">TIM</shortName>
        <shortName evidence="1">TPI</shortName>
        <ecNumber evidence="1">5.3.1.1</ecNumber>
    </recommendedName>
    <alternativeName>
        <fullName evidence="1">Triose-phosphate isomerase</fullName>
    </alternativeName>
</protein>
<comment type="function">
    <text evidence="1">Involved in the gluconeogenesis. Catalyzes stereospecifically the conversion of dihydroxyacetone phosphate (DHAP) to D-glyceraldehyde-3-phosphate (G3P).</text>
</comment>
<comment type="catalytic activity">
    <reaction evidence="1">
        <text>D-glyceraldehyde 3-phosphate = dihydroxyacetone phosphate</text>
        <dbReference type="Rhea" id="RHEA:18585"/>
        <dbReference type="ChEBI" id="CHEBI:57642"/>
        <dbReference type="ChEBI" id="CHEBI:59776"/>
        <dbReference type="EC" id="5.3.1.1"/>
    </reaction>
</comment>
<comment type="pathway">
    <text evidence="1">Carbohydrate biosynthesis; gluconeogenesis.</text>
</comment>
<comment type="pathway">
    <text evidence="1">Carbohydrate degradation; glycolysis; D-glyceraldehyde 3-phosphate from glycerone phosphate: step 1/1.</text>
</comment>
<comment type="subunit">
    <text evidence="1">Homodimer.</text>
</comment>
<comment type="subcellular location">
    <subcellularLocation>
        <location evidence="1">Cytoplasm</location>
    </subcellularLocation>
</comment>
<comment type="similarity">
    <text evidence="1">Belongs to the triosephosphate isomerase family.</text>
</comment>
<feature type="chain" id="PRO_0000307581" description="Triosephosphate isomerase">
    <location>
        <begin position="1"/>
        <end position="252"/>
    </location>
</feature>
<feature type="active site" description="Electrophile" evidence="1">
    <location>
        <position position="96"/>
    </location>
</feature>
<feature type="active site" description="Proton acceptor" evidence="1">
    <location>
        <position position="168"/>
    </location>
</feature>
<feature type="binding site" evidence="1">
    <location>
        <begin position="10"/>
        <end position="12"/>
    </location>
    <ligand>
        <name>substrate</name>
    </ligand>
</feature>
<feature type="binding site" evidence="1">
    <location>
        <position position="174"/>
    </location>
    <ligand>
        <name>substrate</name>
    </ligand>
</feature>
<feature type="binding site" evidence="1">
    <location>
        <position position="214"/>
    </location>
    <ligand>
        <name>substrate</name>
    </ligand>
</feature>
<feature type="binding site" evidence="1">
    <location>
        <begin position="235"/>
        <end position="236"/>
    </location>
    <ligand>
        <name>substrate</name>
    </ligand>
</feature>
<gene>
    <name evidence="1" type="primary">tpiA</name>
    <name type="ordered locus">STER_0525</name>
</gene>
<evidence type="ECO:0000255" key="1">
    <source>
        <dbReference type="HAMAP-Rule" id="MF_00147"/>
    </source>
</evidence>